<proteinExistence type="inferred from homology"/>
<feature type="chain" id="PRO_0000257526" description="Putative pre-16S rRNA nuclease">
    <location>
        <begin position="1"/>
        <end position="146"/>
    </location>
</feature>
<dbReference type="EC" id="3.1.-.-" evidence="1"/>
<dbReference type="EMBL" id="CP000089">
    <property type="protein sequence ID" value="AAZ48620.1"/>
    <property type="molecule type" value="Genomic_DNA"/>
</dbReference>
<dbReference type="SMR" id="Q478W1"/>
<dbReference type="STRING" id="159087.Daro_3892"/>
<dbReference type="KEGG" id="dar:Daro_3892"/>
<dbReference type="eggNOG" id="COG0816">
    <property type="taxonomic scope" value="Bacteria"/>
</dbReference>
<dbReference type="HOGENOM" id="CLU_098240_3_2_4"/>
<dbReference type="OrthoDB" id="9796140at2"/>
<dbReference type="GO" id="GO:0005829">
    <property type="term" value="C:cytosol"/>
    <property type="evidence" value="ECO:0007669"/>
    <property type="project" value="TreeGrafter"/>
</dbReference>
<dbReference type="GO" id="GO:0004518">
    <property type="term" value="F:nuclease activity"/>
    <property type="evidence" value="ECO:0007669"/>
    <property type="project" value="UniProtKB-KW"/>
</dbReference>
<dbReference type="GO" id="GO:0000967">
    <property type="term" value="P:rRNA 5'-end processing"/>
    <property type="evidence" value="ECO:0007669"/>
    <property type="project" value="UniProtKB-UniRule"/>
</dbReference>
<dbReference type="CDD" id="cd16964">
    <property type="entry name" value="YqgF"/>
    <property type="match status" value="1"/>
</dbReference>
<dbReference type="Gene3D" id="3.30.420.140">
    <property type="entry name" value="YqgF/RNase H-like domain"/>
    <property type="match status" value="1"/>
</dbReference>
<dbReference type="HAMAP" id="MF_00651">
    <property type="entry name" value="Nuclease_YqgF"/>
    <property type="match status" value="1"/>
</dbReference>
<dbReference type="InterPro" id="IPR012337">
    <property type="entry name" value="RNaseH-like_sf"/>
</dbReference>
<dbReference type="InterPro" id="IPR005227">
    <property type="entry name" value="YqgF"/>
</dbReference>
<dbReference type="InterPro" id="IPR006641">
    <property type="entry name" value="YqgF/RNaseH-like_dom"/>
</dbReference>
<dbReference type="InterPro" id="IPR037027">
    <property type="entry name" value="YqgF/RNaseH-like_dom_sf"/>
</dbReference>
<dbReference type="NCBIfam" id="TIGR00250">
    <property type="entry name" value="RNAse_H_YqgF"/>
    <property type="match status" value="1"/>
</dbReference>
<dbReference type="PANTHER" id="PTHR33317">
    <property type="entry name" value="POLYNUCLEOTIDYL TRANSFERASE, RIBONUCLEASE H-LIKE SUPERFAMILY PROTEIN"/>
    <property type="match status" value="1"/>
</dbReference>
<dbReference type="PANTHER" id="PTHR33317:SF4">
    <property type="entry name" value="POLYNUCLEOTIDYL TRANSFERASE, RIBONUCLEASE H-LIKE SUPERFAMILY PROTEIN"/>
    <property type="match status" value="1"/>
</dbReference>
<dbReference type="Pfam" id="PF03652">
    <property type="entry name" value="RuvX"/>
    <property type="match status" value="1"/>
</dbReference>
<dbReference type="SMART" id="SM00732">
    <property type="entry name" value="YqgFc"/>
    <property type="match status" value="1"/>
</dbReference>
<dbReference type="SUPFAM" id="SSF53098">
    <property type="entry name" value="Ribonuclease H-like"/>
    <property type="match status" value="1"/>
</dbReference>
<keyword id="KW-0963">Cytoplasm</keyword>
<keyword id="KW-0378">Hydrolase</keyword>
<keyword id="KW-0540">Nuclease</keyword>
<keyword id="KW-0690">Ribosome biogenesis</keyword>
<protein>
    <recommendedName>
        <fullName evidence="1">Putative pre-16S rRNA nuclease</fullName>
        <ecNumber evidence="1">3.1.-.-</ecNumber>
    </recommendedName>
</protein>
<reference key="1">
    <citation type="journal article" date="2009" name="BMC Genomics">
        <title>Metabolic analysis of the soil microbe Dechloromonas aromatica str. RCB: indications of a surprisingly complex life-style and cryptic anaerobic pathways for aromatic degradation.</title>
        <authorList>
            <person name="Salinero K.K."/>
            <person name="Keller K."/>
            <person name="Feil W.S."/>
            <person name="Feil H."/>
            <person name="Trong S."/>
            <person name="Di Bartolo G."/>
            <person name="Lapidus A."/>
        </authorList>
    </citation>
    <scope>NUCLEOTIDE SEQUENCE [LARGE SCALE GENOMIC DNA]</scope>
    <source>
        <strain>RCB</strain>
    </source>
</reference>
<gene>
    <name type="ordered locus">Daro_3892</name>
</gene>
<accession>Q478W1</accession>
<sequence length="146" mass="16013">MGTVLAFDFGEKRIGVATGETMLCSAHPLTTIHAESNEDRFAAIGKLVAEWQPEQLVVGLPTHADGTPHEMTRLATKFGERLARRFNLPVSFADERLTSLDAEARLRETGRNSKSAKPLLDAVAAQLILQTWFESPHHVIPTQPSA</sequence>
<name>YQGF_DECAR</name>
<comment type="function">
    <text evidence="1">Could be a nuclease involved in processing of the 5'-end of pre-16S rRNA.</text>
</comment>
<comment type="subcellular location">
    <subcellularLocation>
        <location evidence="1">Cytoplasm</location>
    </subcellularLocation>
</comment>
<comment type="similarity">
    <text evidence="1">Belongs to the YqgF nuclease family.</text>
</comment>
<organism>
    <name type="scientific">Dechloromonas aromatica (strain RCB)</name>
    <dbReference type="NCBI Taxonomy" id="159087"/>
    <lineage>
        <taxon>Bacteria</taxon>
        <taxon>Pseudomonadati</taxon>
        <taxon>Pseudomonadota</taxon>
        <taxon>Betaproteobacteria</taxon>
        <taxon>Rhodocyclales</taxon>
        <taxon>Azonexaceae</taxon>
        <taxon>Dechloromonas</taxon>
    </lineage>
</organism>
<evidence type="ECO:0000255" key="1">
    <source>
        <dbReference type="HAMAP-Rule" id="MF_00651"/>
    </source>
</evidence>